<keyword id="KW-1003">Cell membrane</keyword>
<keyword id="KW-0472">Membrane</keyword>
<keyword id="KW-0812">Transmembrane</keyword>
<keyword id="KW-1133">Transmembrane helix</keyword>
<keyword id="KW-0843">Virulence</keyword>
<evidence type="ECO:0000250" key="1">
    <source>
        <dbReference type="UniProtKB" id="P0C052"/>
    </source>
</evidence>
<evidence type="ECO:0000255" key="2"/>
<evidence type="ECO:0000305" key="3"/>
<proteinExistence type="inferred from homology"/>
<accession>Q99WU2</accession>
<sequence length="152" mass="17451">MLMNSVIALTFLTASSNNGGLNIDVQQEEEKRINNDLNQYDTTLFNKDSKEVNDAIAKQKKERQQQIKNDMFQNQASHSTRLNETKKVLFSKSNLEKTSESDKSPYIQNKQEKKIFPYILMSVGAFLTLGFVIFSIHKGRRTKNESARKSNI</sequence>
<dbReference type="EMBL" id="BA000017">
    <property type="protein sequence ID" value="BAB56446.1"/>
    <property type="molecule type" value="Genomic_DNA"/>
</dbReference>
<dbReference type="RefSeq" id="WP_000928938.1">
    <property type="nucleotide sequence ID" value="NC_002758.2"/>
</dbReference>
<dbReference type="TCDB" id="3.A.7.17.1">
    <property type="family name" value="the type iv (conjugal dna-protein transfer or virb) secretory pathway (ivsp) family"/>
</dbReference>
<dbReference type="KEGG" id="sav:SAV0284"/>
<dbReference type="HOGENOM" id="CLU_144832_0_0_9"/>
<dbReference type="Proteomes" id="UP000002481">
    <property type="component" value="Chromosome"/>
</dbReference>
<dbReference type="GO" id="GO:0005886">
    <property type="term" value="C:plasma membrane"/>
    <property type="evidence" value="ECO:0007669"/>
    <property type="project" value="UniProtKB-SubCell"/>
</dbReference>
<dbReference type="InterPro" id="IPR034026">
    <property type="entry name" value="EssA"/>
</dbReference>
<dbReference type="InterPro" id="IPR018920">
    <property type="entry name" value="EssA/YueC"/>
</dbReference>
<dbReference type="NCBIfam" id="TIGR03927">
    <property type="entry name" value="T7SS_EssA_Firm"/>
    <property type="match status" value="1"/>
</dbReference>
<dbReference type="Pfam" id="PF10661">
    <property type="entry name" value="EssA"/>
    <property type="match status" value="1"/>
</dbReference>
<feature type="chain" id="PRO_0000019570" description="ESAT-6 secretion machinery protein EssA">
    <location>
        <begin position="1"/>
        <end position="152"/>
    </location>
</feature>
<feature type="topological domain" description="Cytoplasmic" evidence="1">
    <location>
        <begin position="1"/>
        <end position="114"/>
    </location>
</feature>
<feature type="transmembrane region" description="Helical" evidence="2">
    <location>
        <begin position="115"/>
        <end position="135"/>
    </location>
</feature>
<feature type="topological domain" description="Extracellular" evidence="1">
    <location>
        <begin position="136"/>
        <end position="152"/>
    </location>
</feature>
<comment type="function">
    <text evidence="1">Component of the ESAT-6 secretion system (Ess). Required for the secretion of EsxA and EsxB.</text>
</comment>
<comment type="subcellular location">
    <subcellularLocation>
        <location evidence="1">Cell membrane</location>
        <topology evidence="2">Single-pass type I membrane protein</topology>
    </subcellularLocation>
</comment>
<comment type="similarity">
    <text evidence="3">Belongs to the EssA family.</text>
</comment>
<name>ESSA_STAAM</name>
<gene>
    <name evidence="1" type="primary">essA</name>
    <name type="ordered locus">SAV0284</name>
</gene>
<protein>
    <recommendedName>
        <fullName evidence="1">ESAT-6 secretion machinery protein EssA</fullName>
    </recommendedName>
</protein>
<organism>
    <name type="scientific">Staphylococcus aureus (strain Mu50 / ATCC 700699)</name>
    <dbReference type="NCBI Taxonomy" id="158878"/>
    <lineage>
        <taxon>Bacteria</taxon>
        <taxon>Bacillati</taxon>
        <taxon>Bacillota</taxon>
        <taxon>Bacilli</taxon>
        <taxon>Bacillales</taxon>
        <taxon>Staphylococcaceae</taxon>
        <taxon>Staphylococcus</taxon>
    </lineage>
</organism>
<reference key="1">
    <citation type="journal article" date="2001" name="Lancet">
        <title>Whole genome sequencing of meticillin-resistant Staphylococcus aureus.</title>
        <authorList>
            <person name="Kuroda M."/>
            <person name="Ohta T."/>
            <person name="Uchiyama I."/>
            <person name="Baba T."/>
            <person name="Yuzawa H."/>
            <person name="Kobayashi I."/>
            <person name="Cui L."/>
            <person name="Oguchi A."/>
            <person name="Aoki K."/>
            <person name="Nagai Y."/>
            <person name="Lian J.-Q."/>
            <person name="Ito T."/>
            <person name="Kanamori M."/>
            <person name="Matsumaru H."/>
            <person name="Maruyama A."/>
            <person name="Murakami H."/>
            <person name="Hosoyama A."/>
            <person name="Mizutani-Ui Y."/>
            <person name="Takahashi N.K."/>
            <person name="Sawano T."/>
            <person name="Inoue R."/>
            <person name="Kaito C."/>
            <person name="Sekimizu K."/>
            <person name="Hirakawa H."/>
            <person name="Kuhara S."/>
            <person name="Goto S."/>
            <person name="Yabuzaki J."/>
            <person name="Kanehisa M."/>
            <person name="Yamashita A."/>
            <person name="Oshima K."/>
            <person name="Furuya K."/>
            <person name="Yoshino C."/>
            <person name="Shiba T."/>
            <person name="Hattori M."/>
            <person name="Ogasawara N."/>
            <person name="Hayashi H."/>
            <person name="Hiramatsu K."/>
        </authorList>
    </citation>
    <scope>NUCLEOTIDE SEQUENCE [LARGE SCALE GENOMIC DNA]</scope>
    <source>
        <strain>Mu50 / ATCC 700699</strain>
    </source>
</reference>